<keyword id="KW-0687">Ribonucleoprotein</keyword>
<keyword id="KW-0689">Ribosomal protein</keyword>
<gene>
    <name evidence="1" type="primary">rpmH</name>
    <name type="ordered locus">Erum5791</name>
    <name type="ordered locus">ERWE_CDS_06090</name>
</gene>
<organism>
    <name type="scientific">Ehrlichia ruminantium (strain Welgevonden)</name>
    <dbReference type="NCBI Taxonomy" id="254945"/>
    <lineage>
        <taxon>Bacteria</taxon>
        <taxon>Pseudomonadati</taxon>
        <taxon>Pseudomonadota</taxon>
        <taxon>Alphaproteobacteria</taxon>
        <taxon>Rickettsiales</taxon>
        <taxon>Anaplasmataceae</taxon>
        <taxon>Ehrlichia</taxon>
    </lineage>
</organism>
<name>RL34_EHRRW</name>
<protein>
    <recommendedName>
        <fullName evidence="1">Large ribosomal subunit protein bL34</fullName>
    </recommendedName>
    <alternativeName>
        <fullName evidence="2">50S ribosomal protein L34</fullName>
    </alternativeName>
</protein>
<accession>Q5HAV1</accession>
<accession>Q5FD44</accession>
<comment type="similarity">
    <text evidence="1">Belongs to the bacterial ribosomal protein bL34 family.</text>
</comment>
<evidence type="ECO:0000255" key="1">
    <source>
        <dbReference type="HAMAP-Rule" id="MF_00391"/>
    </source>
</evidence>
<evidence type="ECO:0000305" key="2"/>
<sequence length="44" mass="5457">MRQTFQPSRIVRKRRHGFRTRMSTRMGRKILNRRRTQGRRVLCA</sequence>
<feature type="chain" id="PRO_0000187381" description="Large ribosomal subunit protein bL34">
    <location>
        <begin position="1"/>
        <end position="44"/>
    </location>
</feature>
<dbReference type="EMBL" id="CR767821">
    <property type="protein sequence ID" value="CAH58310.1"/>
    <property type="molecule type" value="Genomic_DNA"/>
</dbReference>
<dbReference type="EMBL" id="CR925678">
    <property type="protein sequence ID" value="CAI27103.1"/>
    <property type="molecule type" value="Genomic_DNA"/>
</dbReference>
<dbReference type="RefSeq" id="WP_011155260.1">
    <property type="nucleotide sequence ID" value="NC_005295.2"/>
</dbReference>
<dbReference type="SMR" id="Q5HAV1"/>
<dbReference type="GeneID" id="33057762"/>
<dbReference type="KEGG" id="eru:Erum5791"/>
<dbReference type="KEGG" id="erw:ERWE_CDS_06090"/>
<dbReference type="eggNOG" id="COG0230">
    <property type="taxonomic scope" value="Bacteria"/>
</dbReference>
<dbReference type="HOGENOM" id="CLU_129938_2_0_5"/>
<dbReference type="Proteomes" id="UP000001021">
    <property type="component" value="Chromosome"/>
</dbReference>
<dbReference type="GO" id="GO:1990904">
    <property type="term" value="C:ribonucleoprotein complex"/>
    <property type="evidence" value="ECO:0007669"/>
    <property type="project" value="UniProtKB-KW"/>
</dbReference>
<dbReference type="GO" id="GO:0005840">
    <property type="term" value="C:ribosome"/>
    <property type="evidence" value="ECO:0007669"/>
    <property type="project" value="UniProtKB-KW"/>
</dbReference>
<dbReference type="GO" id="GO:0003735">
    <property type="term" value="F:structural constituent of ribosome"/>
    <property type="evidence" value="ECO:0007669"/>
    <property type="project" value="InterPro"/>
</dbReference>
<dbReference type="GO" id="GO:0006412">
    <property type="term" value="P:translation"/>
    <property type="evidence" value="ECO:0007669"/>
    <property type="project" value="UniProtKB-UniRule"/>
</dbReference>
<dbReference type="FunFam" id="1.10.287.3980:FF:000001">
    <property type="entry name" value="Mitochondrial ribosomal protein L34"/>
    <property type="match status" value="1"/>
</dbReference>
<dbReference type="Gene3D" id="1.10.287.3980">
    <property type="match status" value="1"/>
</dbReference>
<dbReference type="HAMAP" id="MF_00391">
    <property type="entry name" value="Ribosomal_bL34"/>
    <property type="match status" value="1"/>
</dbReference>
<dbReference type="InterPro" id="IPR000271">
    <property type="entry name" value="Ribosomal_bL34"/>
</dbReference>
<dbReference type="NCBIfam" id="TIGR01030">
    <property type="entry name" value="rpmH_bact"/>
    <property type="match status" value="1"/>
</dbReference>
<dbReference type="PANTHER" id="PTHR14503:SF4">
    <property type="entry name" value="LARGE RIBOSOMAL SUBUNIT PROTEIN BL34M"/>
    <property type="match status" value="1"/>
</dbReference>
<dbReference type="PANTHER" id="PTHR14503">
    <property type="entry name" value="MITOCHONDRIAL RIBOSOMAL PROTEIN 34 FAMILY MEMBER"/>
    <property type="match status" value="1"/>
</dbReference>
<dbReference type="Pfam" id="PF00468">
    <property type="entry name" value="Ribosomal_L34"/>
    <property type="match status" value="1"/>
</dbReference>
<reference key="1">
    <citation type="journal article" date="2005" name="Proc. Natl. Acad. Sci. U.S.A.">
        <title>The genome of the heartwater agent Ehrlichia ruminantium contains multiple tandem repeats of actively variable copy number.</title>
        <authorList>
            <person name="Collins N.E."/>
            <person name="Liebenberg J."/>
            <person name="de Villiers E.P."/>
            <person name="Brayton K.A."/>
            <person name="Louw E."/>
            <person name="Pretorius A."/>
            <person name="Faber F.E."/>
            <person name="van Heerden H."/>
            <person name="Josemans A."/>
            <person name="van Kleef M."/>
            <person name="Steyn H.C."/>
            <person name="van Strijp M.F."/>
            <person name="Zweygarth E."/>
            <person name="Jongejan F."/>
            <person name="Maillard J.C."/>
            <person name="Berthier D."/>
            <person name="Botha M."/>
            <person name="Joubert F."/>
            <person name="Corton C.H."/>
            <person name="Thomson N.R."/>
            <person name="Allsopp M.T."/>
            <person name="Allsopp B.A."/>
        </authorList>
    </citation>
    <scope>NUCLEOTIDE SEQUENCE [LARGE SCALE GENOMIC DNA]</scope>
    <source>
        <strain>Welgevonden</strain>
    </source>
</reference>
<reference key="2">
    <citation type="journal article" date="2006" name="J. Bacteriol.">
        <title>Comparative genomic analysis of three strains of Ehrlichia ruminantium reveals an active process of genome size plasticity.</title>
        <authorList>
            <person name="Frutos R."/>
            <person name="Viari A."/>
            <person name="Ferraz C."/>
            <person name="Morgat A."/>
            <person name="Eychenie S."/>
            <person name="Kandassamy Y."/>
            <person name="Chantal I."/>
            <person name="Bensaid A."/>
            <person name="Coissac E."/>
            <person name="Vachiery N."/>
            <person name="Demaille J."/>
            <person name="Martinez D."/>
        </authorList>
    </citation>
    <scope>NUCLEOTIDE SEQUENCE [LARGE SCALE GENOMIC DNA]</scope>
    <source>
        <strain>Welgevonden</strain>
    </source>
</reference>
<proteinExistence type="inferred from homology"/>